<dbReference type="EC" id="6.3.5.3" evidence="1"/>
<dbReference type="EMBL" id="CP000377">
    <property type="protein sequence ID" value="ABF63851.1"/>
    <property type="molecule type" value="Genomic_DNA"/>
</dbReference>
<dbReference type="RefSeq" id="WP_011538458.1">
    <property type="nucleotide sequence ID" value="NC_008044.1"/>
</dbReference>
<dbReference type="SMR" id="Q1GHL5"/>
<dbReference type="STRING" id="292414.TM1040_1118"/>
<dbReference type="KEGG" id="sit:TM1040_1118"/>
<dbReference type="eggNOG" id="COG0046">
    <property type="taxonomic scope" value="Bacteria"/>
</dbReference>
<dbReference type="HOGENOM" id="CLU_003100_0_1_5"/>
<dbReference type="OrthoDB" id="9804441at2"/>
<dbReference type="UniPathway" id="UPA00074">
    <property type="reaction ID" value="UER00128"/>
</dbReference>
<dbReference type="Proteomes" id="UP000000636">
    <property type="component" value="Chromosome"/>
</dbReference>
<dbReference type="GO" id="GO:0005737">
    <property type="term" value="C:cytoplasm"/>
    <property type="evidence" value="ECO:0007669"/>
    <property type="project" value="UniProtKB-SubCell"/>
</dbReference>
<dbReference type="GO" id="GO:0005524">
    <property type="term" value="F:ATP binding"/>
    <property type="evidence" value="ECO:0007669"/>
    <property type="project" value="UniProtKB-UniRule"/>
</dbReference>
<dbReference type="GO" id="GO:0000287">
    <property type="term" value="F:magnesium ion binding"/>
    <property type="evidence" value="ECO:0007669"/>
    <property type="project" value="UniProtKB-UniRule"/>
</dbReference>
<dbReference type="GO" id="GO:0004642">
    <property type="term" value="F:phosphoribosylformylglycinamidine synthase activity"/>
    <property type="evidence" value="ECO:0007669"/>
    <property type="project" value="UniProtKB-UniRule"/>
</dbReference>
<dbReference type="GO" id="GO:0006189">
    <property type="term" value="P:'de novo' IMP biosynthetic process"/>
    <property type="evidence" value="ECO:0007669"/>
    <property type="project" value="UniProtKB-UniRule"/>
</dbReference>
<dbReference type="CDD" id="cd02203">
    <property type="entry name" value="PurL_repeat1"/>
    <property type="match status" value="1"/>
</dbReference>
<dbReference type="CDD" id="cd02204">
    <property type="entry name" value="PurL_repeat2"/>
    <property type="match status" value="1"/>
</dbReference>
<dbReference type="FunFam" id="3.30.1330.10:FF:000004">
    <property type="entry name" value="Phosphoribosylformylglycinamidine synthase subunit PurL"/>
    <property type="match status" value="1"/>
</dbReference>
<dbReference type="Gene3D" id="3.90.650.10">
    <property type="entry name" value="PurM-like C-terminal domain"/>
    <property type="match status" value="2"/>
</dbReference>
<dbReference type="Gene3D" id="3.30.1330.10">
    <property type="entry name" value="PurM-like, N-terminal domain"/>
    <property type="match status" value="2"/>
</dbReference>
<dbReference type="HAMAP" id="MF_00420">
    <property type="entry name" value="PurL_2"/>
    <property type="match status" value="1"/>
</dbReference>
<dbReference type="InterPro" id="IPR010074">
    <property type="entry name" value="PRibForGlyAmidine_synth_PurL"/>
</dbReference>
<dbReference type="InterPro" id="IPR041609">
    <property type="entry name" value="PurL_linker"/>
</dbReference>
<dbReference type="InterPro" id="IPR010918">
    <property type="entry name" value="PurM-like_C_dom"/>
</dbReference>
<dbReference type="InterPro" id="IPR036676">
    <property type="entry name" value="PurM-like_C_sf"/>
</dbReference>
<dbReference type="InterPro" id="IPR016188">
    <property type="entry name" value="PurM-like_N"/>
</dbReference>
<dbReference type="InterPro" id="IPR036921">
    <property type="entry name" value="PurM-like_N_sf"/>
</dbReference>
<dbReference type="NCBIfam" id="TIGR01736">
    <property type="entry name" value="FGAM_synth_II"/>
    <property type="match status" value="1"/>
</dbReference>
<dbReference type="NCBIfam" id="NF002290">
    <property type="entry name" value="PRK01213.1"/>
    <property type="match status" value="1"/>
</dbReference>
<dbReference type="PANTHER" id="PTHR43555">
    <property type="entry name" value="PHOSPHORIBOSYLFORMYLGLYCINAMIDINE SYNTHASE SUBUNIT PURL"/>
    <property type="match status" value="1"/>
</dbReference>
<dbReference type="PANTHER" id="PTHR43555:SF1">
    <property type="entry name" value="PHOSPHORIBOSYLFORMYLGLYCINAMIDINE SYNTHASE SUBUNIT PURL"/>
    <property type="match status" value="1"/>
</dbReference>
<dbReference type="Pfam" id="PF00586">
    <property type="entry name" value="AIRS"/>
    <property type="match status" value="2"/>
</dbReference>
<dbReference type="Pfam" id="PF02769">
    <property type="entry name" value="AIRS_C"/>
    <property type="match status" value="2"/>
</dbReference>
<dbReference type="Pfam" id="PF18072">
    <property type="entry name" value="FGAR-AT_linker"/>
    <property type="match status" value="1"/>
</dbReference>
<dbReference type="PIRSF" id="PIRSF001587">
    <property type="entry name" value="FGAM_synthase_II"/>
    <property type="match status" value="1"/>
</dbReference>
<dbReference type="SUPFAM" id="SSF56042">
    <property type="entry name" value="PurM C-terminal domain-like"/>
    <property type="match status" value="2"/>
</dbReference>
<dbReference type="SUPFAM" id="SSF55326">
    <property type="entry name" value="PurM N-terminal domain-like"/>
    <property type="match status" value="2"/>
</dbReference>
<sequence>MQEPAITPEVIENHGLKPDEYDLILEIIGREPTFTELGIFSAMWNEHCSYKSSKKWLRTLPTSGPQVICGPGENAGIVDIGDGDAVVFKMESHNHPSYIEPYQGAATGVGGILRDVFTMGARPIASMNSLSFGEPAHHKTRQLVNGVVEGVGGYGNCFGVPCVGGEVRFHPAYNGNCLVNAFAAGLVKTDMIFYSAASGVGMPVVYLGAKTGRDGVGGATMASAEFDDTIEEKRPTVQVGDPFTEKRLMEATLELMQTGAVISIQDMGAAGLTCSAVEMGDKGGLGVRLDLEKVPQREENMTAYEMMLSESQERMLMVLKPELEAEAKAVFEKWDLDFAIVGETIAEDRFLIMHNGEVKADLPLSKLSSSAPEYDRPWIEVEAPAALTDADVPTIDPIDGLKALISSPNYAGKQWVYEQYDTTVMGDTARRPGLGGGMVRVHGTDKKLAFTSDVTPRYVKANPVEGGKQAVAEAYRNLCAVGAKPLATTDNLNFGNPEKPEIMGQFVGALKGIGEAVSALDMPIVSGNVSLYNETDGQAILPTPTIGAVGLVAAGEEPILGEARDGHVLLLVGETIGHLGQSALLHEVFNREDGDAPAVDLEIEKRNGEFIRNNRDFIKACTDISDGGLALAAFELAEAAGVGVQIDASDTPTLFGEDQARYLVACNFDQAEALMIAAGQAGVPLETVGKFTGDTVKMGGSEATLEELSQIFRTSFAEAVA</sequence>
<accession>Q1GHL5</accession>
<reference key="1">
    <citation type="submission" date="2006-05" db="EMBL/GenBank/DDBJ databases">
        <title>Complete sequence of chromosome of Silicibacter sp. TM1040.</title>
        <authorList>
            <consortium name="US DOE Joint Genome Institute"/>
            <person name="Copeland A."/>
            <person name="Lucas S."/>
            <person name="Lapidus A."/>
            <person name="Barry K."/>
            <person name="Detter J.C."/>
            <person name="Glavina del Rio T."/>
            <person name="Hammon N."/>
            <person name="Israni S."/>
            <person name="Dalin E."/>
            <person name="Tice H."/>
            <person name="Pitluck S."/>
            <person name="Brettin T."/>
            <person name="Bruce D."/>
            <person name="Han C."/>
            <person name="Tapia R."/>
            <person name="Goodwin L."/>
            <person name="Thompson L.S."/>
            <person name="Gilna P."/>
            <person name="Schmutz J."/>
            <person name="Larimer F."/>
            <person name="Land M."/>
            <person name="Hauser L."/>
            <person name="Kyrpides N."/>
            <person name="Kim E."/>
            <person name="Belas R."/>
            <person name="Moran M.A."/>
            <person name="Buchan A."/>
            <person name="Gonzalez J.M."/>
            <person name="Schell M.A."/>
            <person name="Sun F."/>
            <person name="Richardson P."/>
        </authorList>
    </citation>
    <scope>NUCLEOTIDE SEQUENCE [LARGE SCALE GENOMIC DNA]</scope>
    <source>
        <strain>TM1040</strain>
    </source>
</reference>
<organism>
    <name type="scientific">Ruegeria sp. (strain TM1040)</name>
    <name type="common">Silicibacter sp.</name>
    <dbReference type="NCBI Taxonomy" id="292414"/>
    <lineage>
        <taxon>Bacteria</taxon>
        <taxon>Pseudomonadati</taxon>
        <taxon>Pseudomonadota</taxon>
        <taxon>Alphaproteobacteria</taxon>
        <taxon>Rhodobacterales</taxon>
        <taxon>Roseobacteraceae</taxon>
        <taxon>Ruegeria</taxon>
    </lineage>
</organism>
<name>PURL_RUEST</name>
<evidence type="ECO:0000255" key="1">
    <source>
        <dbReference type="HAMAP-Rule" id="MF_00420"/>
    </source>
</evidence>
<feature type="chain" id="PRO_1000050348" description="Phosphoribosylformylglycinamidine synthase subunit PurL">
    <location>
        <begin position="1"/>
        <end position="721"/>
    </location>
</feature>
<feature type="active site" evidence="1">
    <location>
        <position position="47"/>
    </location>
</feature>
<feature type="active site" description="Proton acceptor" evidence="1">
    <location>
        <position position="93"/>
    </location>
</feature>
<feature type="binding site" evidence="1">
    <location>
        <position position="50"/>
    </location>
    <ligand>
        <name>ATP</name>
        <dbReference type="ChEBI" id="CHEBI:30616"/>
    </ligand>
</feature>
<feature type="binding site" evidence="1">
    <location>
        <position position="89"/>
    </location>
    <ligand>
        <name>ATP</name>
        <dbReference type="ChEBI" id="CHEBI:30616"/>
    </ligand>
</feature>
<feature type="binding site" evidence="1">
    <location>
        <position position="91"/>
    </location>
    <ligand>
        <name>Mg(2+)</name>
        <dbReference type="ChEBI" id="CHEBI:18420"/>
        <label>1</label>
    </ligand>
</feature>
<feature type="binding site" evidence="1">
    <location>
        <begin position="92"/>
        <end position="95"/>
    </location>
    <ligand>
        <name>substrate</name>
    </ligand>
</feature>
<feature type="binding site" evidence="1">
    <location>
        <position position="114"/>
    </location>
    <ligand>
        <name>substrate</name>
    </ligand>
</feature>
<feature type="binding site" evidence="1">
    <location>
        <position position="115"/>
    </location>
    <ligand>
        <name>Mg(2+)</name>
        <dbReference type="ChEBI" id="CHEBI:18420"/>
        <label>2</label>
    </ligand>
</feature>
<feature type="binding site" evidence="1">
    <location>
        <position position="238"/>
    </location>
    <ligand>
        <name>substrate</name>
    </ligand>
</feature>
<feature type="binding site" evidence="1">
    <location>
        <position position="266"/>
    </location>
    <ligand>
        <name>Mg(2+)</name>
        <dbReference type="ChEBI" id="CHEBI:18420"/>
        <label>2</label>
    </ligand>
</feature>
<feature type="binding site" evidence="1">
    <location>
        <begin position="310"/>
        <end position="312"/>
    </location>
    <ligand>
        <name>substrate</name>
    </ligand>
</feature>
<feature type="binding site" evidence="1">
    <location>
        <position position="490"/>
    </location>
    <ligand>
        <name>ATP</name>
        <dbReference type="ChEBI" id="CHEBI:30616"/>
    </ligand>
</feature>
<feature type="binding site" evidence="1">
    <location>
        <position position="527"/>
    </location>
    <ligand>
        <name>ATP</name>
        <dbReference type="ChEBI" id="CHEBI:30616"/>
    </ligand>
</feature>
<feature type="binding site" evidence="1">
    <location>
        <position position="528"/>
    </location>
    <ligand>
        <name>Mg(2+)</name>
        <dbReference type="ChEBI" id="CHEBI:18420"/>
        <label>1</label>
    </ligand>
</feature>
<feature type="binding site" evidence="1">
    <location>
        <position position="530"/>
    </location>
    <ligand>
        <name>substrate</name>
    </ligand>
</feature>
<proteinExistence type="inferred from homology"/>
<keyword id="KW-0067">ATP-binding</keyword>
<keyword id="KW-0963">Cytoplasm</keyword>
<keyword id="KW-0436">Ligase</keyword>
<keyword id="KW-0460">Magnesium</keyword>
<keyword id="KW-0479">Metal-binding</keyword>
<keyword id="KW-0547">Nucleotide-binding</keyword>
<keyword id="KW-0658">Purine biosynthesis</keyword>
<keyword id="KW-1185">Reference proteome</keyword>
<gene>
    <name evidence="1" type="primary">purL</name>
    <name type="ordered locus">TM1040_1118</name>
</gene>
<protein>
    <recommendedName>
        <fullName evidence="1">Phosphoribosylformylglycinamidine synthase subunit PurL</fullName>
        <shortName evidence="1">FGAM synthase</shortName>
        <ecNumber evidence="1">6.3.5.3</ecNumber>
    </recommendedName>
    <alternativeName>
        <fullName evidence="1">Formylglycinamide ribonucleotide amidotransferase subunit II</fullName>
        <shortName evidence="1">FGAR amidotransferase II</shortName>
        <shortName evidence="1">FGAR-AT II</shortName>
    </alternativeName>
    <alternativeName>
        <fullName evidence="1">Glutamine amidotransferase PurL</fullName>
    </alternativeName>
    <alternativeName>
        <fullName evidence="1">Phosphoribosylformylglycinamidine synthase subunit II</fullName>
    </alternativeName>
</protein>
<comment type="function">
    <text evidence="1">Part of the phosphoribosylformylglycinamidine synthase complex involved in the purines biosynthetic pathway. Catalyzes the ATP-dependent conversion of formylglycinamide ribonucleotide (FGAR) and glutamine to yield formylglycinamidine ribonucleotide (FGAM) and glutamate. The FGAM synthase complex is composed of three subunits. PurQ produces an ammonia molecule by converting glutamine to glutamate. PurL transfers the ammonia molecule to FGAR to form FGAM in an ATP-dependent manner. PurS interacts with PurQ and PurL and is thought to assist in the transfer of the ammonia molecule from PurQ to PurL.</text>
</comment>
<comment type="catalytic activity">
    <reaction evidence="1">
        <text>N(2)-formyl-N(1)-(5-phospho-beta-D-ribosyl)glycinamide + L-glutamine + ATP + H2O = 2-formamido-N(1)-(5-O-phospho-beta-D-ribosyl)acetamidine + L-glutamate + ADP + phosphate + H(+)</text>
        <dbReference type="Rhea" id="RHEA:17129"/>
        <dbReference type="ChEBI" id="CHEBI:15377"/>
        <dbReference type="ChEBI" id="CHEBI:15378"/>
        <dbReference type="ChEBI" id="CHEBI:29985"/>
        <dbReference type="ChEBI" id="CHEBI:30616"/>
        <dbReference type="ChEBI" id="CHEBI:43474"/>
        <dbReference type="ChEBI" id="CHEBI:58359"/>
        <dbReference type="ChEBI" id="CHEBI:147286"/>
        <dbReference type="ChEBI" id="CHEBI:147287"/>
        <dbReference type="ChEBI" id="CHEBI:456216"/>
        <dbReference type="EC" id="6.3.5.3"/>
    </reaction>
</comment>
<comment type="pathway">
    <text evidence="1">Purine metabolism; IMP biosynthesis via de novo pathway; 5-amino-1-(5-phospho-D-ribosyl)imidazole from N(2)-formyl-N(1)-(5-phospho-D-ribosyl)glycinamide: step 1/2.</text>
</comment>
<comment type="subunit">
    <text evidence="1">Monomer. Part of the FGAM synthase complex composed of 1 PurL, 1 PurQ and 2 PurS subunits.</text>
</comment>
<comment type="subcellular location">
    <subcellularLocation>
        <location evidence="1">Cytoplasm</location>
    </subcellularLocation>
</comment>
<comment type="similarity">
    <text evidence="1">Belongs to the FGAMS family.</text>
</comment>